<evidence type="ECO:0000255" key="1">
    <source>
        <dbReference type="HAMAP-Rule" id="MF_01367"/>
    </source>
</evidence>
<evidence type="ECO:0000305" key="2"/>
<name>RL14_BRUA1</name>
<protein>
    <recommendedName>
        <fullName evidence="1">Large ribosomal subunit protein uL14</fullName>
    </recommendedName>
    <alternativeName>
        <fullName evidence="2">50S ribosomal protein L14</fullName>
    </alternativeName>
</protein>
<sequence length="122" mass="13474">MIQMQTNLDVADNSGARRVMCIKVLGGSKRRYASVGDIIVVSIKEAIPRGRVKKGEVMKAVVVRTAKDIRRPDGSVIRFDNNAAVLIDNKKEPIGTRIFGPVPRELRAKNHMKIISLAPEVL</sequence>
<proteinExistence type="inferred from homology"/>
<reference key="1">
    <citation type="journal article" date="2008" name="PLoS ONE">
        <title>Genome sequence of Brucella abortus vaccine strain S19 compared to virulent strains yields candidate virulence genes.</title>
        <authorList>
            <person name="Crasta O.R."/>
            <person name="Folkerts O."/>
            <person name="Fei Z."/>
            <person name="Mane S.P."/>
            <person name="Evans C."/>
            <person name="Martino-Catt S."/>
            <person name="Bricker B."/>
            <person name="Yu G."/>
            <person name="Du L."/>
            <person name="Sobral B.W."/>
        </authorList>
    </citation>
    <scope>NUCLEOTIDE SEQUENCE [LARGE SCALE GENOMIC DNA]</scope>
    <source>
        <strain>S19</strain>
    </source>
</reference>
<dbReference type="EMBL" id="CP000887">
    <property type="protein sequence ID" value="ACD72666.1"/>
    <property type="molecule type" value="Genomic_DNA"/>
</dbReference>
<dbReference type="RefSeq" id="WP_002964352.1">
    <property type="nucleotide sequence ID" value="NC_010742.1"/>
</dbReference>
<dbReference type="SMR" id="B2S669"/>
<dbReference type="GeneID" id="93016449"/>
<dbReference type="KEGG" id="bmc:BAbS19_I11610"/>
<dbReference type="HOGENOM" id="CLU_095071_2_1_5"/>
<dbReference type="Proteomes" id="UP000002565">
    <property type="component" value="Chromosome 1"/>
</dbReference>
<dbReference type="GO" id="GO:0022625">
    <property type="term" value="C:cytosolic large ribosomal subunit"/>
    <property type="evidence" value="ECO:0007669"/>
    <property type="project" value="TreeGrafter"/>
</dbReference>
<dbReference type="GO" id="GO:0070180">
    <property type="term" value="F:large ribosomal subunit rRNA binding"/>
    <property type="evidence" value="ECO:0007669"/>
    <property type="project" value="TreeGrafter"/>
</dbReference>
<dbReference type="GO" id="GO:0003735">
    <property type="term" value="F:structural constituent of ribosome"/>
    <property type="evidence" value="ECO:0007669"/>
    <property type="project" value="InterPro"/>
</dbReference>
<dbReference type="GO" id="GO:0006412">
    <property type="term" value="P:translation"/>
    <property type="evidence" value="ECO:0007669"/>
    <property type="project" value="UniProtKB-UniRule"/>
</dbReference>
<dbReference type="CDD" id="cd00337">
    <property type="entry name" value="Ribosomal_uL14"/>
    <property type="match status" value="1"/>
</dbReference>
<dbReference type="FunFam" id="2.40.150.20:FF:000001">
    <property type="entry name" value="50S ribosomal protein L14"/>
    <property type="match status" value="1"/>
</dbReference>
<dbReference type="Gene3D" id="2.40.150.20">
    <property type="entry name" value="Ribosomal protein L14"/>
    <property type="match status" value="1"/>
</dbReference>
<dbReference type="HAMAP" id="MF_01367">
    <property type="entry name" value="Ribosomal_uL14"/>
    <property type="match status" value="1"/>
</dbReference>
<dbReference type="InterPro" id="IPR000218">
    <property type="entry name" value="Ribosomal_uL14"/>
</dbReference>
<dbReference type="InterPro" id="IPR005745">
    <property type="entry name" value="Ribosomal_uL14_bac-type"/>
</dbReference>
<dbReference type="InterPro" id="IPR019972">
    <property type="entry name" value="Ribosomal_uL14_CS"/>
</dbReference>
<dbReference type="InterPro" id="IPR036853">
    <property type="entry name" value="Ribosomal_uL14_sf"/>
</dbReference>
<dbReference type="NCBIfam" id="TIGR01067">
    <property type="entry name" value="rplN_bact"/>
    <property type="match status" value="1"/>
</dbReference>
<dbReference type="PANTHER" id="PTHR11761">
    <property type="entry name" value="50S/60S RIBOSOMAL PROTEIN L14/L23"/>
    <property type="match status" value="1"/>
</dbReference>
<dbReference type="PANTHER" id="PTHR11761:SF3">
    <property type="entry name" value="LARGE RIBOSOMAL SUBUNIT PROTEIN UL14M"/>
    <property type="match status" value="1"/>
</dbReference>
<dbReference type="Pfam" id="PF00238">
    <property type="entry name" value="Ribosomal_L14"/>
    <property type="match status" value="1"/>
</dbReference>
<dbReference type="SMART" id="SM01374">
    <property type="entry name" value="Ribosomal_L14"/>
    <property type="match status" value="1"/>
</dbReference>
<dbReference type="SUPFAM" id="SSF50193">
    <property type="entry name" value="Ribosomal protein L14"/>
    <property type="match status" value="1"/>
</dbReference>
<dbReference type="PROSITE" id="PS00049">
    <property type="entry name" value="RIBOSOMAL_L14"/>
    <property type="match status" value="1"/>
</dbReference>
<gene>
    <name evidence="1" type="primary">rplN</name>
    <name type="ordered locus">BAbS19_I11610</name>
</gene>
<feature type="chain" id="PRO_1000144231" description="Large ribosomal subunit protein uL14">
    <location>
        <begin position="1"/>
        <end position="122"/>
    </location>
</feature>
<organism>
    <name type="scientific">Brucella abortus (strain S19)</name>
    <dbReference type="NCBI Taxonomy" id="430066"/>
    <lineage>
        <taxon>Bacteria</taxon>
        <taxon>Pseudomonadati</taxon>
        <taxon>Pseudomonadota</taxon>
        <taxon>Alphaproteobacteria</taxon>
        <taxon>Hyphomicrobiales</taxon>
        <taxon>Brucellaceae</taxon>
        <taxon>Brucella/Ochrobactrum group</taxon>
        <taxon>Brucella</taxon>
    </lineage>
</organism>
<keyword id="KW-0687">Ribonucleoprotein</keyword>
<keyword id="KW-0689">Ribosomal protein</keyword>
<keyword id="KW-0694">RNA-binding</keyword>
<keyword id="KW-0699">rRNA-binding</keyword>
<comment type="function">
    <text evidence="1">Binds to 23S rRNA. Forms part of two intersubunit bridges in the 70S ribosome.</text>
</comment>
<comment type="subunit">
    <text evidence="1">Part of the 50S ribosomal subunit. Forms a cluster with proteins L3 and L19. In the 70S ribosome, L14 and L19 interact and together make contacts with the 16S rRNA in bridges B5 and B8.</text>
</comment>
<comment type="similarity">
    <text evidence="1">Belongs to the universal ribosomal protein uL14 family.</text>
</comment>
<accession>B2S669</accession>